<proteinExistence type="inferred from homology"/>
<sequence>MLADDRLIVALDVPNAVAGLALAERLGDAVSFYKIGLGMLTGGGLALANELKQEHGKRIFLDMKLFDIGNTVEAAVRGLSQFDLDFLTVHGDPHVVRAAKEGAAGKDLKILAVTILTSLNRDDLDASLIKPGDVHDLVLERAARAFEAGADGVIASPQEAAAIRALPEAAGRLIVTPGIRPAGADLGDQKRVATPANAIADGVDHIVVGRPVVHAPDPRAAALSILAEMTSPQAVAPNRS</sequence>
<comment type="function">
    <text evidence="1">Catalyzes the decarboxylation of orotidine 5'-monophosphate (OMP) to uridine 5'-monophosphate (UMP).</text>
</comment>
<comment type="catalytic activity">
    <reaction evidence="1">
        <text>orotidine 5'-phosphate + H(+) = UMP + CO2</text>
        <dbReference type="Rhea" id="RHEA:11596"/>
        <dbReference type="ChEBI" id="CHEBI:15378"/>
        <dbReference type="ChEBI" id="CHEBI:16526"/>
        <dbReference type="ChEBI" id="CHEBI:57538"/>
        <dbReference type="ChEBI" id="CHEBI:57865"/>
        <dbReference type="EC" id="4.1.1.23"/>
    </reaction>
</comment>
<comment type="pathway">
    <text evidence="1">Pyrimidine metabolism; UMP biosynthesis via de novo pathway; UMP from orotate: step 2/2.</text>
</comment>
<comment type="subunit">
    <text evidence="1">Homodimer.</text>
</comment>
<comment type="similarity">
    <text evidence="1">Belongs to the OMP decarboxylase family. Type 1 subfamily.</text>
</comment>
<feature type="chain" id="PRO_0000241908" description="Orotidine 5'-phosphate decarboxylase">
    <location>
        <begin position="1"/>
        <end position="240"/>
    </location>
</feature>
<feature type="active site" description="Proton donor" evidence="1">
    <location>
        <position position="64"/>
    </location>
</feature>
<feature type="binding site" evidence="1">
    <location>
        <position position="12"/>
    </location>
    <ligand>
        <name>substrate</name>
    </ligand>
</feature>
<feature type="binding site" evidence="1">
    <location>
        <position position="34"/>
    </location>
    <ligand>
        <name>substrate</name>
    </ligand>
</feature>
<feature type="binding site" evidence="1">
    <location>
        <begin position="62"/>
        <end position="71"/>
    </location>
    <ligand>
        <name>substrate</name>
    </ligand>
</feature>
<feature type="binding site" evidence="1">
    <location>
        <position position="117"/>
    </location>
    <ligand>
        <name>substrate</name>
    </ligand>
</feature>
<feature type="binding site" evidence="1">
    <location>
        <position position="180"/>
    </location>
    <ligand>
        <name>substrate</name>
    </ligand>
</feature>
<feature type="binding site" evidence="1">
    <location>
        <position position="189"/>
    </location>
    <ligand>
        <name>substrate</name>
    </ligand>
</feature>
<feature type="binding site" evidence="1">
    <location>
        <position position="209"/>
    </location>
    <ligand>
        <name>substrate</name>
    </ligand>
</feature>
<feature type="binding site" evidence="1">
    <location>
        <position position="210"/>
    </location>
    <ligand>
        <name>substrate</name>
    </ligand>
</feature>
<keyword id="KW-0210">Decarboxylase</keyword>
<keyword id="KW-0456">Lyase</keyword>
<keyword id="KW-0665">Pyrimidine biosynthesis</keyword>
<keyword id="KW-1185">Reference proteome</keyword>
<organism>
    <name type="scientific">Ruegeria pomeroyi (strain ATCC 700808 / DSM 15171 / DSS-3)</name>
    <name type="common">Silicibacter pomeroyi</name>
    <dbReference type="NCBI Taxonomy" id="246200"/>
    <lineage>
        <taxon>Bacteria</taxon>
        <taxon>Pseudomonadati</taxon>
        <taxon>Pseudomonadota</taxon>
        <taxon>Alphaproteobacteria</taxon>
        <taxon>Rhodobacterales</taxon>
        <taxon>Roseobacteraceae</taxon>
        <taxon>Ruegeria</taxon>
    </lineage>
</organism>
<gene>
    <name evidence="1" type="primary">pyrF</name>
    <name type="ordered locus">SPO3278</name>
</gene>
<protein>
    <recommendedName>
        <fullName evidence="1">Orotidine 5'-phosphate decarboxylase</fullName>
        <ecNumber evidence="1">4.1.1.23</ecNumber>
    </recommendedName>
    <alternativeName>
        <fullName evidence="1">OMP decarboxylase</fullName>
        <shortName evidence="1">OMPDCase</shortName>
        <shortName evidence="1">OMPdecase</shortName>
    </alternativeName>
</protein>
<name>PYRF_RUEPO</name>
<reference key="1">
    <citation type="journal article" date="2004" name="Nature">
        <title>Genome sequence of Silicibacter pomeroyi reveals adaptations to the marine environment.</title>
        <authorList>
            <person name="Moran M.A."/>
            <person name="Buchan A."/>
            <person name="Gonzalez J.M."/>
            <person name="Heidelberg J.F."/>
            <person name="Whitman W.B."/>
            <person name="Kiene R.P."/>
            <person name="Henriksen J.R."/>
            <person name="King G.M."/>
            <person name="Belas R."/>
            <person name="Fuqua C."/>
            <person name="Brinkac L.M."/>
            <person name="Lewis M."/>
            <person name="Johri S."/>
            <person name="Weaver B."/>
            <person name="Pai G."/>
            <person name="Eisen J.A."/>
            <person name="Rahe E."/>
            <person name="Sheldon W.M."/>
            <person name="Ye W."/>
            <person name="Miller T.R."/>
            <person name="Carlton J."/>
            <person name="Rasko D.A."/>
            <person name="Paulsen I.T."/>
            <person name="Ren Q."/>
            <person name="Daugherty S.C."/>
            <person name="DeBoy R.T."/>
            <person name="Dodson R.J."/>
            <person name="Durkin A.S."/>
            <person name="Madupu R."/>
            <person name="Nelson W.C."/>
            <person name="Sullivan S.A."/>
            <person name="Rosovitz M.J."/>
            <person name="Haft D.H."/>
            <person name="Selengut J."/>
            <person name="Ward N."/>
        </authorList>
    </citation>
    <scope>NUCLEOTIDE SEQUENCE [LARGE SCALE GENOMIC DNA]</scope>
    <source>
        <strain>ATCC 700808 / DSM 15171 / DSS-3</strain>
    </source>
</reference>
<reference key="2">
    <citation type="journal article" date="2014" name="Stand. Genomic Sci.">
        <title>An updated genome annotation for the model marine bacterium Ruegeria pomeroyi DSS-3.</title>
        <authorList>
            <person name="Rivers A.R."/>
            <person name="Smith C.B."/>
            <person name="Moran M.A."/>
        </authorList>
    </citation>
    <scope>GENOME REANNOTATION</scope>
    <source>
        <strain>ATCC 700808 / DSM 15171 / DSS-3</strain>
    </source>
</reference>
<accession>Q5LND3</accession>
<dbReference type="EC" id="4.1.1.23" evidence="1"/>
<dbReference type="EMBL" id="CP000031">
    <property type="protein sequence ID" value="AAV96507.2"/>
    <property type="molecule type" value="Genomic_DNA"/>
</dbReference>
<dbReference type="SMR" id="Q5LND3"/>
<dbReference type="STRING" id="246200.SPO3278"/>
<dbReference type="PaxDb" id="246200-SPO3278"/>
<dbReference type="KEGG" id="sil:SPO3278"/>
<dbReference type="eggNOG" id="COG0284">
    <property type="taxonomic scope" value="Bacteria"/>
</dbReference>
<dbReference type="HOGENOM" id="CLU_067069_1_0_5"/>
<dbReference type="UniPathway" id="UPA00070">
    <property type="reaction ID" value="UER00120"/>
</dbReference>
<dbReference type="Proteomes" id="UP000001023">
    <property type="component" value="Chromosome"/>
</dbReference>
<dbReference type="GO" id="GO:0005829">
    <property type="term" value="C:cytosol"/>
    <property type="evidence" value="ECO:0007669"/>
    <property type="project" value="TreeGrafter"/>
</dbReference>
<dbReference type="GO" id="GO:0004590">
    <property type="term" value="F:orotidine-5'-phosphate decarboxylase activity"/>
    <property type="evidence" value="ECO:0007669"/>
    <property type="project" value="UniProtKB-UniRule"/>
</dbReference>
<dbReference type="GO" id="GO:0006207">
    <property type="term" value="P:'de novo' pyrimidine nucleobase biosynthetic process"/>
    <property type="evidence" value="ECO:0007669"/>
    <property type="project" value="InterPro"/>
</dbReference>
<dbReference type="GO" id="GO:0044205">
    <property type="term" value="P:'de novo' UMP biosynthetic process"/>
    <property type="evidence" value="ECO:0007669"/>
    <property type="project" value="UniProtKB-UniRule"/>
</dbReference>
<dbReference type="CDD" id="cd04725">
    <property type="entry name" value="OMP_decarboxylase_like"/>
    <property type="match status" value="1"/>
</dbReference>
<dbReference type="Gene3D" id="3.20.20.70">
    <property type="entry name" value="Aldolase class I"/>
    <property type="match status" value="1"/>
</dbReference>
<dbReference type="HAMAP" id="MF_01200_B">
    <property type="entry name" value="OMPdecase_type1_B"/>
    <property type="match status" value="1"/>
</dbReference>
<dbReference type="InterPro" id="IPR013785">
    <property type="entry name" value="Aldolase_TIM"/>
</dbReference>
<dbReference type="InterPro" id="IPR014732">
    <property type="entry name" value="OMPdecase"/>
</dbReference>
<dbReference type="InterPro" id="IPR018089">
    <property type="entry name" value="OMPdecase_AS"/>
</dbReference>
<dbReference type="InterPro" id="IPR047596">
    <property type="entry name" value="OMPdecase_bac"/>
</dbReference>
<dbReference type="InterPro" id="IPR001754">
    <property type="entry name" value="OMPdeCOase_dom"/>
</dbReference>
<dbReference type="InterPro" id="IPR011060">
    <property type="entry name" value="RibuloseP-bd_barrel"/>
</dbReference>
<dbReference type="NCBIfam" id="NF001273">
    <property type="entry name" value="PRK00230.1"/>
    <property type="match status" value="1"/>
</dbReference>
<dbReference type="NCBIfam" id="TIGR01740">
    <property type="entry name" value="pyrF"/>
    <property type="match status" value="1"/>
</dbReference>
<dbReference type="PANTHER" id="PTHR32119">
    <property type="entry name" value="OROTIDINE 5'-PHOSPHATE DECARBOXYLASE"/>
    <property type="match status" value="1"/>
</dbReference>
<dbReference type="PANTHER" id="PTHR32119:SF2">
    <property type="entry name" value="OROTIDINE 5'-PHOSPHATE DECARBOXYLASE"/>
    <property type="match status" value="1"/>
</dbReference>
<dbReference type="Pfam" id="PF00215">
    <property type="entry name" value="OMPdecase"/>
    <property type="match status" value="1"/>
</dbReference>
<dbReference type="SMART" id="SM00934">
    <property type="entry name" value="OMPdecase"/>
    <property type="match status" value="1"/>
</dbReference>
<dbReference type="SUPFAM" id="SSF51366">
    <property type="entry name" value="Ribulose-phoshate binding barrel"/>
    <property type="match status" value="1"/>
</dbReference>
<dbReference type="PROSITE" id="PS00156">
    <property type="entry name" value="OMPDECASE"/>
    <property type="match status" value="1"/>
</dbReference>
<evidence type="ECO:0000255" key="1">
    <source>
        <dbReference type="HAMAP-Rule" id="MF_01200"/>
    </source>
</evidence>